<comment type="function">
    <text evidence="1">Key enzyme in the regulation of glycerol uptake and metabolism. Catalyzes the phosphorylation of glycerol to yield sn-glycerol 3-phosphate.</text>
</comment>
<comment type="catalytic activity">
    <reaction evidence="1">
        <text>glycerol + ATP = sn-glycerol 3-phosphate + ADP + H(+)</text>
        <dbReference type="Rhea" id="RHEA:21644"/>
        <dbReference type="ChEBI" id="CHEBI:15378"/>
        <dbReference type="ChEBI" id="CHEBI:17754"/>
        <dbReference type="ChEBI" id="CHEBI:30616"/>
        <dbReference type="ChEBI" id="CHEBI:57597"/>
        <dbReference type="ChEBI" id="CHEBI:456216"/>
        <dbReference type="EC" id="2.7.1.30"/>
    </reaction>
</comment>
<comment type="pathway">
    <text evidence="1">Polyol metabolism; glycerol degradation via glycerol kinase pathway; sn-glycerol 3-phosphate from glycerol: step 1/1.</text>
</comment>
<comment type="similarity">
    <text evidence="1">Belongs to the FGGY kinase family.</text>
</comment>
<name>GLPK2_SACS2</name>
<reference key="1">
    <citation type="journal article" date="1996" name="Mol. Microbiol.">
        <title>Organizational characteristics and information content of an archaeal genome: 156 kb of sequence from Sulfolobus solfataricus P2.</title>
        <authorList>
            <person name="Sensen C.W."/>
            <person name="Klenk H.-P."/>
            <person name="Singh R.K."/>
            <person name="Allard G."/>
            <person name="Chan C.C.-Y."/>
            <person name="Liu Q.Y."/>
            <person name="Penny S.L."/>
            <person name="Young F."/>
            <person name="Schenk M.E."/>
            <person name="Gaasterland T."/>
            <person name="Doolittle W.F."/>
            <person name="Ragan M.A."/>
            <person name="Charlebois R.L."/>
        </authorList>
    </citation>
    <scope>NUCLEOTIDE SEQUENCE [GENOMIC DNA]</scope>
    <source>
        <strain>ATCC 35092 / DSM 1617 / JCM 11322 / P2</strain>
    </source>
</reference>
<reference key="2">
    <citation type="journal article" date="2001" name="Proc. Natl. Acad. Sci. U.S.A.">
        <title>The complete genome of the crenarchaeon Sulfolobus solfataricus P2.</title>
        <authorList>
            <person name="She Q."/>
            <person name="Singh R.K."/>
            <person name="Confalonieri F."/>
            <person name="Zivanovic Y."/>
            <person name="Allard G."/>
            <person name="Awayez M.J."/>
            <person name="Chan-Weiher C.C.-Y."/>
            <person name="Clausen I.G."/>
            <person name="Curtis B.A."/>
            <person name="De Moors A."/>
            <person name="Erauso G."/>
            <person name="Fletcher C."/>
            <person name="Gordon P.M.K."/>
            <person name="Heikamp-de Jong I."/>
            <person name="Jeffries A.C."/>
            <person name="Kozera C.J."/>
            <person name="Medina N."/>
            <person name="Peng X."/>
            <person name="Thi-Ngoc H.P."/>
            <person name="Redder P."/>
            <person name="Schenk M.E."/>
            <person name="Theriault C."/>
            <person name="Tolstrup N."/>
            <person name="Charlebois R.L."/>
            <person name="Doolittle W.F."/>
            <person name="Duguet M."/>
            <person name="Gaasterland T."/>
            <person name="Garrett R.A."/>
            <person name="Ragan M.A."/>
            <person name="Sensen C.W."/>
            <person name="Van der Oost J."/>
        </authorList>
    </citation>
    <scope>NUCLEOTIDE SEQUENCE [LARGE SCALE GENOMIC DNA]</scope>
    <source>
        <strain>ATCC 35092 / DSM 1617 / JCM 11322 / P2</strain>
    </source>
</reference>
<keyword id="KW-0067">ATP-binding</keyword>
<keyword id="KW-0319">Glycerol metabolism</keyword>
<keyword id="KW-0418">Kinase</keyword>
<keyword id="KW-0547">Nucleotide-binding</keyword>
<keyword id="KW-1185">Reference proteome</keyword>
<keyword id="KW-0808">Transferase</keyword>
<accession>P95907</accession>
<gene>
    <name evidence="1" type="primary">glpK2</name>
    <name type="synonym">glpK</name>
    <name type="ordered locus">SSO2133</name>
    <name type="ORF">C01009</name>
    <name type="ORF">C02_028</name>
</gene>
<organism>
    <name type="scientific">Saccharolobus solfataricus (strain ATCC 35092 / DSM 1617 / JCM 11322 / P2)</name>
    <name type="common">Sulfolobus solfataricus</name>
    <dbReference type="NCBI Taxonomy" id="273057"/>
    <lineage>
        <taxon>Archaea</taxon>
        <taxon>Thermoproteota</taxon>
        <taxon>Thermoprotei</taxon>
        <taxon>Sulfolobales</taxon>
        <taxon>Sulfolobaceae</taxon>
        <taxon>Saccharolobus</taxon>
    </lineage>
</organism>
<evidence type="ECO:0000255" key="1">
    <source>
        <dbReference type="HAMAP-Rule" id="MF_00186"/>
    </source>
</evidence>
<proteinExistence type="inferred from homology"/>
<feature type="chain" id="PRO_0000059534" description="Glycerol kinase 2">
    <location>
        <begin position="1"/>
        <end position="499"/>
    </location>
</feature>
<feature type="binding site" evidence="1">
    <location>
        <position position="13"/>
    </location>
    <ligand>
        <name>ADP</name>
        <dbReference type="ChEBI" id="CHEBI:456216"/>
    </ligand>
</feature>
<feature type="binding site" evidence="1">
    <location>
        <position position="13"/>
    </location>
    <ligand>
        <name>ATP</name>
        <dbReference type="ChEBI" id="CHEBI:30616"/>
    </ligand>
</feature>
<feature type="binding site" evidence="1">
    <location>
        <position position="13"/>
    </location>
    <ligand>
        <name>sn-glycerol 3-phosphate</name>
        <dbReference type="ChEBI" id="CHEBI:57597"/>
    </ligand>
</feature>
<feature type="binding site" evidence="1">
    <location>
        <position position="14"/>
    </location>
    <ligand>
        <name>ATP</name>
        <dbReference type="ChEBI" id="CHEBI:30616"/>
    </ligand>
</feature>
<feature type="binding site" evidence="1">
    <location>
        <position position="15"/>
    </location>
    <ligand>
        <name>ATP</name>
        <dbReference type="ChEBI" id="CHEBI:30616"/>
    </ligand>
</feature>
<feature type="binding site" evidence="1">
    <location>
        <position position="17"/>
    </location>
    <ligand>
        <name>ADP</name>
        <dbReference type="ChEBI" id="CHEBI:456216"/>
    </ligand>
</feature>
<feature type="binding site" evidence="1">
    <location>
        <position position="83"/>
    </location>
    <ligand>
        <name>glycerol</name>
        <dbReference type="ChEBI" id="CHEBI:17754"/>
    </ligand>
</feature>
<feature type="binding site" evidence="1">
    <location>
        <position position="83"/>
    </location>
    <ligand>
        <name>sn-glycerol 3-phosphate</name>
        <dbReference type="ChEBI" id="CHEBI:57597"/>
    </ligand>
</feature>
<feature type="binding site" evidence="1">
    <location>
        <position position="84"/>
    </location>
    <ligand>
        <name>glycerol</name>
        <dbReference type="ChEBI" id="CHEBI:17754"/>
    </ligand>
</feature>
<feature type="binding site" evidence="1">
    <location>
        <position position="84"/>
    </location>
    <ligand>
        <name>sn-glycerol 3-phosphate</name>
        <dbReference type="ChEBI" id="CHEBI:57597"/>
    </ligand>
</feature>
<feature type="binding site" evidence="1">
    <location>
        <position position="134"/>
    </location>
    <ligand>
        <name>glycerol</name>
        <dbReference type="ChEBI" id="CHEBI:17754"/>
    </ligand>
</feature>
<feature type="binding site" evidence="1">
    <location>
        <position position="134"/>
    </location>
    <ligand>
        <name>sn-glycerol 3-phosphate</name>
        <dbReference type="ChEBI" id="CHEBI:57597"/>
    </ligand>
</feature>
<feature type="binding site" evidence="1">
    <location>
        <position position="241"/>
    </location>
    <ligand>
        <name>glycerol</name>
        <dbReference type="ChEBI" id="CHEBI:17754"/>
    </ligand>
</feature>
<feature type="binding site" evidence="1">
    <location>
        <position position="241"/>
    </location>
    <ligand>
        <name>sn-glycerol 3-phosphate</name>
        <dbReference type="ChEBI" id="CHEBI:57597"/>
    </ligand>
</feature>
<feature type="binding site" evidence="1">
    <location>
        <position position="242"/>
    </location>
    <ligand>
        <name>glycerol</name>
        <dbReference type="ChEBI" id="CHEBI:17754"/>
    </ligand>
</feature>
<feature type="binding site" evidence="1">
    <location>
        <position position="263"/>
    </location>
    <ligand>
        <name>ADP</name>
        <dbReference type="ChEBI" id="CHEBI:456216"/>
    </ligand>
</feature>
<feature type="binding site" evidence="1">
    <location>
        <position position="263"/>
    </location>
    <ligand>
        <name>ATP</name>
        <dbReference type="ChEBI" id="CHEBI:30616"/>
    </ligand>
</feature>
<feature type="binding site" evidence="1">
    <location>
        <position position="306"/>
    </location>
    <ligand>
        <name>ADP</name>
        <dbReference type="ChEBI" id="CHEBI:456216"/>
    </ligand>
</feature>
<feature type="binding site" evidence="1">
    <location>
        <position position="306"/>
    </location>
    <ligand>
        <name>ATP</name>
        <dbReference type="ChEBI" id="CHEBI:30616"/>
    </ligand>
</feature>
<feature type="binding site" evidence="1">
    <location>
        <position position="310"/>
    </location>
    <ligand>
        <name>ATP</name>
        <dbReference type="ChEBI" id="CHEBI:30616"/>
    </ligand>
</feature>
<feature type="binding site" evidence="1">
    <location>
        <position position="407"/>
    </location>
    <ligand>
        <name>ADP</name>
        <dbReference type="ChEBI" id="CHEBI:456216"/>
    </ligand>
</feature>
<feature type="binding site" evidence="1">
    <location>
        <position position="407"/>
    </location>
    <ligand>
        <name>ATP</name>
        <dbReference type="ChEBI" id="CHEBI:30616"/>
    </ligand>
</feature>
<dbReference type="EC" id="2.7.1.30" evidence="1"/>
<dbReference type="EMBL" id="Y08256">
    <property type="protein sequence ID" value="CAA69459.1"/>
    <property type="molecule type" value="Genomic_DNA"/>
</dbReference>
<dbReference type="EMBL" id="AE006641">
    <property type="protein sequence ID" value="AAK42312.1"/>
    <property type="molecule type" value="Genomic_DNA"/>
</dbReference>
<dbReference type="PIR" id="S74045">
    <property type="entry name" value="S74045"/>
</dbReference>
<dbReference type="RefSeq" id="WP_009988327.1">
    <property type="nucleotide sequence ID" value="NC_002754.1"/>
</dbReference>
<dbReference type="SMR" id="P95907"/>
<dbReference type="FunCoup" id="P95907">
    <property type="interactions" value="125"/>
</dbReference>
<dbReference type="STRING" id="273057.SSO2133"/>
<dbReference type="PaxDb" id="273057-SSO2133"/>
<dbReference type="EnsemblBacteria" id="AAK42312">
    <property type="protein sequence ID" value="AAK42312"/>
    <property type="gene ID" value="SSO2133"/>
</dbReference>
<dbReference type="GeneID" id="44130846"/>
<dbReference type="KEGG" id="sso:SSO2133"/>
<dbReference type="PATRIC" id="fig|273057.12.peg.2225"/>
<dbReference type="eggNOG" id="arCOG00024">
    <property type="taxonomic scope" value="Archaea"/>
</dbReference>
<dbReference type="HOGENOM" id="CLU_009281_2_3_2"/>
<dbReference type="InParanoid" id="P95907"/>
<dbReference type="PhylomeDB" id="P95907"/>
<dbReference type="UniPathway" id="UPA00618">
    <property type="reaction ID" value="UER00672"/>
</dbReference>
<dbReference type="Proteomes" id="UP000001974">
    <property type="component" value="Chromosome"/>
</dbReference>
<dbReference type="GO" id="GO:0005829">
    <property type="term" value="C:cytosol"/>
    <property type="evidence" value="ECO:0000318"/>
    <property type="project" value="GO_Central"/>
</dbReference>
<dbReference type="GO" id="GO:0005524">
    <property type="term" value="F:ATP binding"/>
    <property type="evidence" value="ECO:0007669"/>
    <property type="project" value="UniProtKB-UniRule"/>
</dbReference>
<dbReference type="GO" id="GO:0004370">
    <property type="term" value="F:glycerol kinase activity"/>
    <property type="evidence" value="ECO:0000250"/>
    <property type="project" value="UniProtKB"/>
</dbReference>
<dbReference type="GO" id="GO:0019563">
    <property type="term" value="P:glycerol catabolic process"/>
    <property type="evidence" value="ECO:0007669"/>
    <property type="project" value="UniProtKB-UniRule"/>
</dbReference>
<dbReference type="GO" id="GO:0006071">
    <property type="term" value="P:glycerol metabolic process"/>
    <property type="evidence" value="ECO:0000250"/>
    <property type="project" value="UniProtKB"/>
</dbReference>
<dbReference type="GO" id="GO:0006072">
    <property type="term" value="P:glycerol-3-phosphate metabolic process"/>
    <property type="evidence" value="ECO:0007669"/>
    <property type="project" value="InterPro"/>
</dbReference>
<dbReference type="CDD" id="cd07786">
    <property type="entry name" value="FGGY_EcGK_like"/>
    <property type="match status" value="1"/>
</dbReference>
<dbReference type="FunFam" id="3.30.420.40:FF:000007">
    <property type="entry name" value="Glycerol kinase"/>
    <property type="match status" value="1"/>
</dbReference>
<dbReference type="FunFam" id="3.30.420.40:FF:000008">
    <property type="entry name" value="Glycerol kinase"/>
    <property type="match status" value="1"/>
</dbReference>
<dbReference type="Gene3D" id="3.30.420.40">
    <property type="match status" value="2"/>
</dbReference>
<dbReference type="HAMAP" id="MF_00186">
    <property type="entry name" value="Glycerol_kin"/>
    <property type="match status" value="1"/>
</dbReference>
<dbReference type="InterPro" id="IPR043129">
    <property type="entry name" value="ATPase_NBD"/>
</dbReference>
<dbReference type="InterPro" id="IPR000577">
    <property type="entry name" value="Carb_kinase_FGGY"/>
</dbReference>
<dbReference type="InterPro" id="IPR018483">
    <property type="entry name" value="Carb_kinase_FGGY_CS"/>
</dbReference>
<dbReference type="InterPro" id="IPR018485">
    <property type="entry name" value="FGGY_C"/>
</dbReference>
<dbReference type="InterPro" id="IPR018484">
    <property type="entry name" value="FGGY_N"/>
</dbReference>
<dbReference type="InterPro" id="IPR005999">
    <property type="entry name" value="Glycerol_kin"/>
</dbReference>
<dbReference type="NCBIfam" id="TIGR01311">
    <property type="entry name" value="glycerol_kin"/>
    <property type="match status" value="1"/>
</dbReference>
<dbReference type="NCBIfam" id="NF000756">
    <property type="entry name" value="PRK00047.1"/>
    <property type="match status" value="1"/>
</dbReference>
<dbReference type="PANTHER" id="PTHR10196:SF69">
    <property type="entry name" value="GLYCEROL KINASE"/>
    <property type="match status" value="1"/>
</dbReference>
<dbReference type="PANTHER" id="PTHR10196">
    <property type="entry name" value="SUGAR KINASE"/>
    <property type="match status" value="1"/>
</dbReference>
<dbReference type="Pfam" id="PF02782">
    <property type="entry name" value="FGGY_C"/>
    <property type="match status" value="1"/>
</dbReference>
<dbReference type="Pfam" id="PF00370">
    <property type="entry name" value="FGGY_N"/>
    <property type="match status" value="1"/>
</dbReference>
<dbReference type="PIRSF" id="PIRSF000538">
    <property type="entry name" value="GlpK"/>
    <property type="match status" value="1"/>
</dbReference>
<dbReference type="SUPFAM" id="SSF53067">
    <property type="entry name" value="Actin-like ATPase domain"/>
    <property type="match status" value="2"/>
</dbReference>
<dbReference type="PROSITE" id="PS00933">
    <property type="entry name" value="FGGY_KINASES_1"/>
    <property type="match status" value="1"/>
</dbReference>
<dbReference type="PROSITE" id="PS00445">
    <property type="entry name" value="FGGY_KINASES_2"/>
    <property type="match status" value="1"/>
</dbReference>
<sequence length="499" mass="55643">MPGGFILAIDEGTTSARAIIYNQDLEVLGIGQYDFPQHYPSPGYVEHNPDEIWNAQMLAIKEAMKKAKIESRQVAGIGVTNQRETTILWDAISGKPIYNAIVWQDRRTSNITDWLKENYFGMIKDKTGLIPDPYFSGSKIKWILDNLPNVRSKAEKGEIKFGTIDTYLIWKLTNGKIHVTDYSNASRTMLFNINKLEWDREILELLKIPESILPEVRPSSDIYGYTEVLGSSIPISGDAGDQQAALFGQVAYDMGEVKSTYGTGSFILMNIGSNPIFSENLLTTIAWGLESKRVTYALEGSIFITGAAVQWFRDGLRAIDASDDIEPLAASVPDTGGVYFVPAFVGLGAPYWDPYARGLIIGITRGTTKAHIARAILESIAYQNRDVIEIMEKESGTKINILKVDGGGAKDNLLMQFQADILGIRVVRPKVMETASMGVAMLAGLAINYWNSLNELKQKWTVDKEFIPSINKEERERRYNAWKEAVKRSLGWEKSLGSK</sequence>
<protein>
    <recommendedName>
        <fullName evidence="1">Glycerol kinase 2</fullName>
        <ecNumber evidence="1">2.7.1.30</ecNumber>
    </recommendedName>
    <alternativeName>
        <fullName evidence="1">ATP:glycerol 3-phosphotransferase 2</fullName>
    </alternativeName>
    <alternativeName>
        <fullName evidence="1">Glycerokinase 2</fullName>
        <shortName evidence="1">GK 2</shortName>
    </alternativeName>
</protein>